<sequence length="215" mass="24434">MGVRAQQKEKTRRSLVEAAFSQLSAERSFASLSLREVAREAGIAPTSFYRHFRDVDELGLTMVDESGLMLRQLMRQARQRIAKGGSVIRTSVSTFMEFIGNNPNAFRLLLRERSGTSAAFRAAVAREIQHFIAELADYLELENHMPRAFTEAQAEAMVTIVFSAGAEALDVGVEQRRQLEERLVLQLRMISKGAYYWYRREQEKTTIIPGNVKDE</sequence>
<dbReference type="EMBL" id="CP000247">
    <property type="protein sequence ID" value="ABG72136.1"/>
    <property type="status" value="ALT_INIT"/>
    <property type="molecule type" value="Genomic_DNA"/>
</dbReference>
<dbReference type="SMR" id="Q0TA93"/>
<dbReference type="KEGG" id="ecp:ECP_4180"/>
<dbReference type="HOGENOM" id="CLU_081861_0_0_6"/>
<dbReference type="Proteomes" id="UP000009182">
    <property type="component" value="Chromosome"/>
</dbReference>
<dbReference type="GO" id="GO:0005737">
    <property type="term" value="C:cytoplasm"/>
    <property type="evidence" value="ECO:0007669"/>
    <property type="project" value="UniProtKB-SubCell"/>
</dbReference>
<dbReference type="GO" id="GO:0003677">
    <property type="term" value="F:DNA binding"/>
    <property type="evidence" value="ECO:0007669"/>
    <property type="project" value="UniProtKB-KW"/>
</dbReference>
<dbReference type="GO" id="GO:0003700">
    <property type="term" value="F:DNA-binding transcription factor activity"/>
    <property type="evidence" value="ECO:0007669"/>
    <property type="project" value="UniProtKB-UniRule"/>
</dbReference>
<dbReference type="GO" id="GO:0006633">
    <property type="term" value="P:fatty acid biosynthetic process"/>
    <property type="evidence" value="ECO:0007669"/>
    <property type="project" value="UniProtKB-UniRule"/>
</dbReference>
<dbReference type="GO" id="GO:0045717">
    <property type="term" value="P:negative regulation of fatty acid biosynthetic process"/>
    <property type="evidence" value="ECO:0007669"/>
    <property type="project" value="UniProtKB-UniRule"/>
</dbReference>
<dbReference type="FunFam" id="1.10.10.60:FF:000034">
    <property type="entry name" value="HTH-type transcriptional repressor FabR"/>
    <property type="match status" value="1"/>
</dbReference>
<dbReference type="FunFam" id="1.10.357.10:FF:000001">
    <property type="entry name" value="HTH-type transcriptional repressor FabR"/>
    <property type="match status" value="1"/>
</dbReference>
<dbReference type="Gene3D" id="1.10.10.60">
    <property type="entry name" value="Homeodomain-like"/>
    <property type="match status" value="1"/>
</dbReference>
<dbReference type="Gene3D" id="1.10.357.10">
    <property type="entry name" value="Tetracycline Repressor, domain 2"/>
    <property type="match status" value="1"/>
</dbReference>
<dbReference type="HAMAP" id="MF_01190">
    <property type="entry name" value="HTH_type_FabR"/>
    <property type="match status" value="1"/>
</dbReference>
<dbReference type="InterPro" id="IPR054129">
    <property type="entry name" value="DesT_TetR_C"/>
</dbReference>
<dbReference type="InterPro" id="IPR009057">
    <property type="entry name" value="Homeodomain-like_sf"/>
</dbReference>
<dbReference type="InterPro" id="IPR001647">
    <property type="entry name" value="HTH_TetR"/>
</dbReference>
<dbReference type="InterPro" id="IPR050692">
    <property type="entry name" value="HTH_transcr_repressor_FabR"/>
</dbReference>
<dbReference type="InterPro" id="IPR023764">
    <property type="entry name" value="Tscrpt_reg_HTH_FabR"/>
</dbReference>
<dbReference type="NCBIfam" id="NF008402">
    <property type="entry name" value="PRK11202.1"/>
    <property type="match status" value="1"/>
</dbReference>
<dbReference type="PANTHER" id="PTHR47752">
    <property type="entry name" value="HTH-TYPE TRANSCRIPTIONAL REPRESSOR FABR"/>
    <property type="match status" value="1"/>
</dbReference>
<dbReference type="PANTHER" id="PTHR47752:SF1">
    <property type="entry name" value="HTH-TYPE TRANSCRIPTIONAL REPRESSOR FABR"/>
    <property type="match status" value="1"/>
</dbReference>
<dbReference type="Pfam" id="PF21943">
    <property type="entry name" value="TetR_C_46"/>
    <property type="match status" value="1"/>
</dbReference>
<dbReference type="Pfam" id="PF00440">
    <property type="entry name" value="TetR_N"/>
    <property type="match status" value="1"/>
</dbReference>
<dbReference type="SUPFAM" id="SSF46689">
    <property type="entry name" value="Homeodomain-like"/>
    <property type="match status" value="1"/>
</dbReference>
<dbReference type="PROSITE" id="PS50977">
    <property type="entry name" value="HTH_TETR_2"/>
    <property type="match status" value="1"/>
</dbReference>
<evidence type="ECO:0000255" key="1">
    <source>
        <dbReference type="HAMAP-Rule" id="MF_01190"/>
    </source>
</evidence>
<evidence type="ECO:0000305" key="2"/>
<accession>Q0TA93</accession>
<proteinExistence type="inferred from homology"/>
<organism>
    <name type="scientific">Escherichia coli O6:K15:H31 (strain 536 / UPEC)</name>
    <dbReference type="NCBI Taxonomy" id="362663"/>
    <lineage>
        <taxon>Bacteria</taxon>
        <taxon>Pseudomonadati</taxon>
        <taxon>Pseudomonadota</taxon>
        <taxon>Gammaproteobacteria</taxon>
        <taxon>Enterobacterales</taxon>
        <taxon>Enterobacteriaceae</taxon>
        <taxon>Escherichia</taxon>
    </lineage>
</organism>
<name>FABR_ECOL5</name>
<comment type="function">
    <text evidence="1">Represses the transcription of fabB, involved in unsaturated fatty acid (UFA) biosynthesis. By controlling UFA production, FabR directly influences the physical properties of the membrane bilayer.</text>
</comment>
<comment type="subunit">
    <text evidence="1">Homodimer.</text>
</comment>
<comment type="subcellular location">
    <subcellularLocation>
        <location evidence="1">Cytoplasm</location>
    </subcellularLocation>
</comment>
<comment type="sequence caution" evidence="2">
    <conflict type="erroneous initiation">
        <sequence resource="EMBL-CDS" id="ABG72136"/>
    </conflict>
</comment>
<reference key="1">
    <citation type="journal article" date="2006" name="Mol. Microbiol.">
        <title>Role of pathogenicity island-associated integrases in the genome plasticity of uropathogenic Escherichia coli strain 536.</title>
        <authorList>
            <person name="Hochhut B."/>
            <person name="Wilde C."/>
            <person name="Balling G."/>
            <person name="Middendorf B."/>
            <person name="Dobrindt U."/>
            <person name="Brzuszkiewicz E."/>
            <person name="Gottschalk G."/>
            <person name="Carniel E."/>
            <person name="Hacker J."/>
        </authorList>
    </citation>
    <scope>NUCLEOTIDE SEQUENCE [LARGE SCALE GENOMIC DNA]</scope>
    <source>
        <strain>536 / UPEC</strain>
    </source>
</reference>
<gene>
    <name evidence="1" type="primary">fabR</name>
    <name type="ordered locus">ECP_4180</name>
</gene>
<feature type="chain" id="PRO_0000293569" description="HTH-type transcriptional repressor FabR">
    <location>
        <begin position="1"/>
        <end position="215"/>
    </location>
</feature>
<feature type="domain" description="HTH tetR-type" evidence="1">
    <location>
        <begin position="10"/>
        <end position="70"/>
    </location>
</feature>
<feature type="DNA-binding region" description="H-T-H motif" evidence="1">
    <location>
        <begin position="33"/>
        <end position="52"/>
    </location>
</feature>
<keyword id="KW-0963">Cytoplasm</keyword>
<keyword id="KW-0238">DNA-binding</keyword>
<keyword id="KW-0275">Fatty acid biosynthesis</keyword>
<keyword id="KW-0276">Fatty acid metabolism</keyword>
<keyword id="KW-0444">Lipid biosynthesis</keyword>
<keyword id="KW-0443">Lipid metabolism</keyword>
<keyword id="KW-0678">Repressor</keyword>
<keyword id="KW-0804">Transcription</keyword>
<keyword id="KW-0805">Transcription regulation</keyword>
<protein>
    <recommendedName>
        <fullName evidence="1">HTH-type transcriptional repressor FabR</fullName>
    </recommendedName>
</protein>